<name>F229A_HUMAN</name>
<evidence type="ECO:0000256" key="1">
    <source>
        <dbReference type="SAM" id="MobiDB-lite"/>
    </source>
</evidence>
<evidence type="ECO:0000305" key="2"/>
<reference key="1">
    <citation type="journal article" date="2006" name="Nature">
        <title>The DNA sequence and biological annotation of human chromosome 1.</title>
        <authorList>
            <person name="Gregory S.G."/>
            <person name="Barlow K.F."/>
            <person name="McLay K.E."/>
            <person name="Kaul R."/>
            <person name="Swarbreck D."/>
            <person name="Dunham A."/>
            <person name="Scott C.E."/>
            <person name="Howe K.L."/>
            <person name="Woodfine K."/>
            <person name="Spencer C.C.A."/>
            <person name="Jones M.C."/>
            <person name="Gillson C."/>
            <person name="Searle S."/>
            <person name="Zhou Y."/>
            <person name="Kokocinski F."/>
            <person name="McDonald L."/>
            <person name="Evans R."/>
            <person name="Phillips K."/>
            <person name="Atkinson A."/>
            <person name="Cooper R."/>
            <person name="Jones C."/>
            <person name="Hall R.E."/>
            <person name="Andrews T.D."/>
            <person name="Lloyd C."/>
            <person name="Ainscough R."/>
            <person name="Almeida J.P."/>
            <person name="Ambrose K.D."/>
            <person name="Anderson F."/>
            <person name="Andrew R.W."/>
            <person name="Ashwell R.I.S."/>
            <person name="Aubin K."/>
            <person name="Babbage A.K."/>
            <person name="Bagguley C.L."/>
            <person name="Bailey J."/>
            <person name="Beasley H."/>
            <person name="Bethel G."/>
            <person name="Bird C.P."/>
            <person name="Bray-Allen S."/>
            <person name="Brown J.Y."/>
            <person name="Brown A.J."/>
            <person name="Buckley D."/>
            <person name="Burton J."/>
            <person name="Bye J."/>
            <person name="Carder C."/>
            <person name="Chapman J.C."/>
            <person name="Clark S.Y."/>
            <person name="Clarke G."/>
            <person name="Clee C."/>
            <person name="Cobley V."/>
            <person name="Collier R.E."/>
            <person name="Corby N."/>
            <person name="Coville G.J."/>
            <person name="Davies J."/>
            <person name="Deadman R."/>
            <person name="Dunn M."/>
            <person name="Earthrowl M."/>
            <person name="Ellington A.G."/>
            <person name="Errington H."/>
            <person name="Frankish A."/>
            <person name="Frankland J."/>
            <person name="French L."/>
            <person name="Garner P."/>
            <person name="Garnett J."/>
            <person name="Gay L."/>
            <person name="Ghori M.R.J."/>
            <person name="Gibson R."/>
            <person name="Gilby L.M."/>
            <person name="Gillett W."/>
            <person name="Glithero R.J."/>
            <person name="Grafham D.V."/>
            <person name="Griffiths C."/>
            <person name="Griffiths-Jones S."/>
            <person name="Grocock R."/>
            <person name="Hammond S."/>
            <person name="Harrison E.S.I."/>
            <person name="Hart E."/>
            <person name="Haugen E."/>
            <person name="Heath P.D."/>
            <person name="Holmes S."/>
            <person name="Holt K."/>
            <person name="Howden P.J."/>
            <person name="Hunt A.R."/>
            <person name="Hunt S.E."/>
            <person name="Hunter G."/>
            <person name="Isherwood J."/>
            <person name="James R."/>
            <person name="Johnson C."/>
            <person name="Johnson D."/>
            <person name="Joy A."/>
            <person name="Kay M."/>
            <person name="Kershaw J.K."/>
            <person name="Kibukawa M."/>
            <person name="Kimberley A.M."/>
            <person name="King A."/>
            <person name="Knights A.J."/>
            <person name="Lad H."/>
            <person name="Laird G."/>
            <person name="Lawlor S."/>
            <person name="Leongamornlert D.A."/>
            <person name="Lloyd D.M."/>
            <person name="Loveland J."/>
            <person name="Lovell J."/>
            <person name="Lush M.J."/>
            <person name="Lyne R."/>
            <person name="Martin S."/>
            <person name="Mashreghi-Mohammadi M."/>
            <person name="Matthews L."/>
            <person name="Matthews N.S.W."/>
            <person name="McLaren S."/>
            <person name="Milne S."/>
            <person name="Mistry S."/>
            <person name="Moore M.J.F."/>
            <person name="Nickerson T."/>
            <person name="O'Dell C.N."/>
            <person name="Oliver K."/>
            <person name="Palmeiri A."/>
            <person name="Palmer S.A."/>
            <person name="Parker A."/>
            <person name="Patel D."/>
            <person name="Pearce A.V."/>
            <person name="Peck A.I."/>
            <person name="Pelan S."/>
            <person name="Phelps K."/>
            <person name="Phillimore B.J."/>
            <person name="Plumb R."/>
            <person name="Rajan J."/>
            <person name="Raymond C."/>
            <person name="Rouse G."/>
            <person name="Saenphimmachak C."/>
            <person name="Sehra H.K."/>
            <person name="Sheridan E."/>
            <person name="Shownkeen R."/>
            <person name="Sims S."/>
            <person name="Skuce C.D."/>
            <person name="Smith M."/>
            <person name="Steward C."/>
            <person name="Subramanian S."/>
            <person name="Sycamore N."/>
            <person name="Tracey A."/>
            <person name="Tromans A."/>
            <person name="Van Helmond Z."/>
            <person name="Wall M."/>
            <person name="Wallis J.M."/>
            <person name="White S."/>
            <person name="Whitehead S.L."/>
            <person name="Wilkinson J.E."/>
            <person name="Willey D.L."/>
            <person name="Williams H."/>
            <person name="Wilming L."/>
            <person name="Wray P.W."/>
            <person name="Wu Z."/>
            <person name="Coulson A."/>
            <person name="Vaudin M."/>
            <person name="Sulston J.E."/>
            <person name="Durbin R.M."/>
            <person name="Hubbard T."/>
            <person name="Wooster R."/>
            <person name="Dunham I."/>
            <person name="Carter N.P."/>
            <person name="McVean G."/>
            <person name="Ross M.T."/>
            <person name="Harrow J."/>
            <person name="Olson M.V."/>
            <person name="Beck S."/>
            <person name="Rogers J."/>
            <person name="Bentley D.R."/>
        </authorList>
    </citation>
    <scope>NUCLEOTIDE SEQUENCE [LARGE SCALE GENOMIC DNA]</scope>
</reference>
<reference key="2">
    <citation type="submission" date="2005-09" db="EMBL/GenBank/DDBJ databases">
        <authorList>
            <person name="Mural R.J."/>
            <person name="Istrail S."/>
            <person name="Sutton G.G."/>
            <person name="Florea L."/>
            <person name="Halpern A.L."/>
            <person name="Mobarry C.M."/>
            <person name="Lippert R."/>
            <person name="Walenz B."/>
            <person name="Shatkay H."/>
            <person name="Dew I."/>
            <person name="Miller J.R."/>
            <person name="Flanigan M.J."/>
            <person name="Edwards N.J."/>
            <person name="Bolanos R."/>
            <person name="Fasulo D."/>
            <person name="Halldorsson B.V."/>
            <person name="Hannenhalli S."/>
            <person name="Turner R."/>
            <person name="Yooseph S."/>
            <person name="Lu F."/>
            <person name="Nusskern D.R."/>
            <person name="Shue B.C."/>
            <person name="Zheng X.H."/>
            <person name="Zhong F."/>
            <person name="Delcher A.L."/>
            <person name="Huson D.H."/>
            <person name="Kravitz S.A."/>
            <person name="Mouchard L."/>
            <person name="Reinert K."/>
            <person name="Remington K.A."/>
            <person name="Clark A.G."/>
            <person name="Waterman M.S."/>
            <person name="Eichler E.E."/>
            <person name="Adams M.D."/>
            <person name="Hunkapiller M.W."/>
            <person name="Myers E.W."/>
            <person name="Venter J.C."/>
        </authorList>
    </citation>
    <scope>NUCLEOTIDE SEQUENCE [LARGE SCALE GENOMIC DNA]</scope>
</reference>
<gene>
    <name type="primary">FAM229A</name>
</gene>
<protein>
    <recommendedName>
        <fullName>Protein FAM229A</fullName>
    </recommendedName>
</protein>
<dbReference type="EMBL" id="AL109945">
    <property type="status" value="NOT_ANNOTATED_CDS"/>
    <property type="molecule type" value="Genomic_DNA"/>
</dbReference>
<dbReference type="EMBL" id="CH471059">
    <property type="protein sequence ID" value="EAX07533.1"/>
    <property type="molecule type" value="Genomic_DNA"/>
</dbReference>
<dbReference type="CCDS" id="CCDS57985.1"/>
<dbReference type="RefSeq" id="NP_001161148.1">
    <property type="nucleotide sequence ID" value="NM_001167676.2"/>
</dbReference>
<dbReference type="BioGRID" id="933259">
    <property type="interactions" value="1"/>
</dbReference>
<dbReference type="STRING" id="9606.ENSP00000455971"/>
<dbReference type="GlyGen" id="H3BQW9">
    <property type="glycosylation" value="1 site"/>
</dbReference>
<dbReference type="iPTMnet" id="H3BQW9"/>
<dbReference type="PhosphoSitePlus" id="H3BQW9"/>
<dbReference type="BioMuta" id="FAM229A"/>
<dbReference type="PaxDb" id="9606-ENSP00000455971"/>
<dbReference type="Antibodypedia" id="74176">
    <property type="antibodies" value="1 antibodies from 1 providers"/>
</dbReference>
<dbReference type="DNASU" id="100128071"/>
<dbReference type="Ensembl" id="ENST00000432622.2">
    <property type="protein sequence ID" value="ENSP00000455971.1"/>
    <property type="gene ID" value="ENSG00000225828.2"/>
</dbReference>
<dbReference type="GeneID" id="100128071"/>
<dbReference type="KEGG" id="hsa:100128071"/>
<dbReference type="MANE-Select" id="ENST00000432622.2">
    <property type="protein sequence ID" value="ENSP00000455971.1"/>
    <property type="RefSeq nucleotide sequence ID" value="NM_001167676.2"/>
    <property type="RefSeq protein sequence ID" value="NP_001161148.1"/>
</dbReference>
<dbReference type="UCSC" id="uc021oku.1">
    <property type="organism name" value="human"/>
</dbReference>
<dbReference type="AGR" id="HGNC:44652"/>
<dbReference type="CTD" id="100128071"/>
<dbReference type="DisGeNET" id="100128071"/>
<dbReference type="GeneCards" id="FAM229A"/>
<dbReference type="HGNC" id="HGNC:44652">
    <property type="gene designation" value="FAM229A"/>
</dbReference>
<dbReference type="HPA" id="ENSG00000225828">
    <property type="expression patterns" value="Tissue enriched (testis)"/>
</dbReference>
<dbReference type="neXtProt" id="NX_H3BQW9"/>
<dbReference type="OpenTargets" id="ENSG00000225828"/>
<dbReference type="VEuPathDB" id="HostDB:ENSG00000225828"/>
<dbReference type="eggNOG" id="ENOG502SVAR">
    <property type="taxonomic scope" value="Eukaryota"/>
</dbReference>
<dbReference type="GeneTree" id="ENSGT00390000017996"/>
<dbReference type="HOGENOM" id="CLU_1969768_0_0_1"/>
<dbReference type="InParanoid" id="H3BQW9"/>
<dbReference type="OMA" id="HATETCP"/>
<dbReference type="OrthoDB" id="9885352at2759"/>
<dbReference type="PAN-GO" id="H3BQW9">
    <property type="GO annotations" value="0 GO annotations based on evolutionary models"/>
</dbReference>
<dbReference type="PhylomeDB" id="H3BQW9"/>
<dbReference type="TreeFam" id="TF339579"/>
<dbReference type="PathwayCommons" id="H3BQW9"/>
<dbReference type="BioGRID-ORCS" id="100128071">
    <property type="hits" value="61 hits in 1147 CRISPR screens"/>
</dbReference>
<dbReference type="GenomeRNAi" id="100128071"/>
<dbReference type="Pharos" id="H3BQW9">
    <property type="development level" value="Tdark"/>
</dbReference>
<dbReference type="PRO" id="PR:H3BQW9"/>
<dbReference type="Proteomes" id="UP000005640">
    <property type="component" value="Chromosome 1"/>
</dbReference>
<dbReference type="RNAct" id="H3BQW9">
    <property type="molecule type" value="protein"/>
</dbReference>
<dbReference type="Bgee" id="ENSG00000225828">
    <property type="expression patterns" value="Expressed in right testis and 94 other cell types or tissues"/>
</dbReference>
<dbReference type="ExpressionAtlas" id="H3BQW9">
    <property type="expression patterns" value="baseline and differential"/>
</dbReference>
<dbReference type="InterPro" id="IPR028025">
    <property type="entry name" value="FAM229"/>
</dbReference>
<dbReference type="PANTHER" id="PTHR35355">
    <property type="entry name" value="PROTEIN FAM229A"/>
    <property type="match status" value="1"/>
</dbReference>
<dbReference type="PANTHER" id="PTHR35355:SF1">
    <property type="entry name" value="PROTEIN FAM229A"/>
    <property type="match status" value="1"/>
</dbReference>
<dbReference type="Pfam" id="PF14982">
    <property type="entry name" value="UPF0731"/>
    <property type="match status" value="1"/>
</dbReference>
<organism>
    <name type="scientific">Homo sapiens</name>
    <name type="common">Human</name>
    <dbReference type="NCBI Taxonomy" id="9606"/>
    <lineage>
        <taxon>Eukaryota</taxon>
        <taxon>Metazoa</taxon>
        <taxon>Chordata</taxon>
        <taxon>Craniata</taxon>
        <taxon>Vertebrata</taxon>
        <taxon>Euteleostomi</taxon>
        <taxon>Mammalia</taxon>
        <taxon>Eutheria</taxon>
        <taxon>Euarchontoglires</taxon>
        <taxon>Primates</taxon>
        <taxon>Haplorrhini</taxon>
        <taxon>Catarrhini</taxon>
        <taxon>Hominidae</taxon>
        <taxon>Homo</taxon>
    </lineage>
</organism>
<sequence>MLPSSTPGPGHATETCPAPPGPERSPAARAPAAASSLGPVSTAGRAPRGLDMSAQEPPQGRRFPIEAGDSRGLAAAPESQDSPEAVATEHNPVRPLRRCPGCHCLTLLHVPIDVYLAMGGSPRARAT</sequence>
<keyword id="KW-1185">Reference proteome</keyword>
<feature type="chain" id="PRO_0000421723" description="Protein FAM229A">
    <location>
        <begin position="1"/>
        <end position="127"/>
    </location>
</feature>
<feature type="region of interest" description="Disordered" evidence="1">
    <location>
        <begin position="1"/>
        <end position="96"/>
    </location>
</feature>
<feature type="compositionally biased region" description="Low complexity" evidence="1">
    <location>
        <begin position="24"/>
        <end position="39"/>
    </location>
</feature>
<comment type="similarity">
    <text evidence="2">Belongs to the FAM229 family.</text>
</comment>
<proteinExistence type="inferred from homology"/>
<accession>H3BQW9</accession>